<comment type="catalytic activity">
    <reaction>
        <text>L-glutamate + acetyl-CoA = N-acetyl-L-glutamate + CoA + H(+)</text>
        <dbReference type="Rhea" id="RHEA:24292"/>
        <dbReference type="ChEBI" id="CHEBI:15378"/>
        <dbReference type="ChEBI" id="CHEBI:29985"/>
        <dbReference type="ChEBI" id="CHEBI:44337"/>
        <dbReference type="ChEBI" id="CHEBI:57287"/>
        <dbReference type="ChEBI" id="CHEBI:57288"/>
        <dbReference type="EC" id="2.3.1.1"/>
    </reaction>
</comment>
<comment type="pathway">
    <text>Amino-acid biosynthesis; L-arginine biosynthesis; N(2)-acetyl-L-ornithine from L-glutamate: step 1/4.</text>
</comment>
<comment type="subcellular location">
    <subcellularLocation>
        <location evidence="1">Cytoplasm</location>
    </subcellularLocation>
</comment>
<comment type="similarity">
    <text evidence="2">Belongs to the acetyltransferase family. ArgA subfamily.</text>
</comment>
<name>ARGA_VIBVU</name>
<organism>
    <name type="scientific">Vibrio vulnificus (strain CMCP6)</name>
    <dbReference type="NCBI Taxonomy" id="216895"/>
    <lineage>
        <taxon>Bacteria</taxon>
        <taxon>Pseudomonadati</taxon>
        <taxon>Pseudomonadota</taxon>
        <taxon>Gammaproteobacteria</taxon>
        <taxon>Vibrionales</taxon>
        <taxon>Vibrionaceae</taxon>
        <taxon>Vibrio</taxon>
    </lineage>
</organism>
<proteinExistence type="inferred from homology"/>
<evidence type="ECO:0000250" key="1"/>
<evidence type="ECO:0000305" key="2"/>
<sequence>MKIRSTALVKGFRQSTPYVNAHRGKTMVILLGGEAIADKNFSNIINDIALMHSLGVKVVLVYGARPQINQLLDKQSSQTPYHKHIRVTDENSLSIVMQAAGQLQLAITASLSMSLNNTPMAGTHLNVVSGNFVIAQPLGIDEGVDYCHSGRIRRIDTEAINRSLDQGSIVLLGPIASSVTGECFNLLSEEVATQVAIKLKADKLIGFCSEQGVIDEEGNAVAELFPSDAEKFIQKLSVDVDPDSDFHSGTLRFLKGAVAACRAGVPRSHLISYKIDGALIQELFSFDGIGTQVVMASAEQVRQACIDDIGGILELIRPLEEQGILVRRSREQLEQEVERFTIIEKDGLIIGCAALYPYIDEHMAEMACVAIHPDYRDGNRGLLLLNYMKHRSKSIGIEQIFVLTTHSVHWFREQGFYEIGVDSLPMAKKSLYNYQRRSKILALPL</sequence>
<accession>P59294</accession>
<feature type="chain" id="PRO_0000186810" description="Amino-acid acetyltransferase">
    <location>
        <begin position="1"/>
        <end position="445"/>
    </location>
</feature>
<feature type="domain" description="N-acetyltransferase">
    <location>
        <begin position="299"/>
        <end position="438"/>
    </location>
</feature>
<dbReference type="EC" id="2.3.1.1"/>
<dbReference type="EMBL" id="AE016795">
    <property type="protein sequence ID" value="AAO10207.1"/>
    <property type="molecule type" value="Genomic_DNA"/>
</dbReference>
<dbReference type="RefSeq" id="WP_011079707.1">
    <property type="nucleotide sequence ID" value="NC_004459.3"/>
</dbReference>
<dbReference type="SMR" id="P59294"/>
<dbReference type="KEGG" id="vvu:VV1_1799"/>
<dbReference type="HOGENOM" id="CLU_024773_0_0_6"/>
<dbReference type="UniPathway" id="UPA00068">
    <property type="reaction ID" value="UER00106"/>
</dbReference>
<dbReference type="Proteomes" id="UP000002275">
    <property type="component" value="Chromosome 1"/>
</dbReference>
<dbReference type="GO" id="GO:0005737">
    <property type="term" value="C:cytoplasm"/>
    <property type="evidence" value="ECO:0007669"/>
    <property type="project" value="UniProtKB-SubCell"/>
</dbReference>
<dbReference type="GO" id="GO:0004042">
    <property type="term" value="F:L-glutamate N-acetyltransferase activity"/>
    <property type="evidence" value="ECO:0007669"/>
    <property type="project" value="UniProtKB-UniRule"/>
</dbReference>
<dbReference type="GO" id="GO:0006526">
    <property type="term" value="P:L-arginine biosynthetic process"/>
    <property type="evidence" value="ECO:0007669"/>
    <property type="project" value="UniProtKB-UniRule"/>
</dbReference>
<dbReference type="CDD" id="cd04237">
    <property type="entry name" value="AAK_NAGS-ABP"/>
    <property type="match status" value="1"/>
</dbReference>
<dbReference type="CDD" id="cd04301">
    <property type="entry name" value="NAT_SF"/>
    <property type="match status" value="1"/>
</dbReference>
<dbReference type="FunFam" id="3.40.1160.10:FF:000005">
    <property type="entry name" value="Amino-acid acetyltransferase"/>
    <property type="match status" value="1"/>
</dbReference>
<dbReference type="Gene3D" id="3.40.630.30">
    <property type="match status" value="1"/>
</dbReference>
<dbReference type="Gene3D" id="3.40.1160.10">
    <property type="entry name" value="Acetylglutamate kinase-like"/>
    <property type="match status" value="1"/>
</dbReference>
<dbReference type="HAMAP" id="MF_01105">
    <property type="entry name" value="N_acetyl_glu_synth"/>
    <property type="match status" value="1"/>
</dbReference>
<dbReference type="InterPro" id="IPR036393">
    <property type="entry name" value="AceGlu_kinase-like_sf"/>
</dbReference>
<dbReference type="InterPro" id="IPR016181">
    <property type="entry name" value="Acyl_CoA_acyltransferase"/>
</dbReference>
<dbReference type="InterPro" id="IPR001048">
    <property type="entry name" value="Asp/Glu/Uridylate_kinase"/>
</dbReference>
<dbReference type="InterPro" id="IPR000182">
    <property type="entry name" value="GNAT_dom"/>
</dbReference>
<dbReference type="InterPro" id="IPR033719">
    <property type="entry name" value="NAGS_kin"/>
</dbReference>
<dbReference type="InterPro" id="IPR010167">
    <property type="entry name" value="NH2A_AcTrfase"/>
</dbReference>
<dbReference type="NCBIfam" id="TIGR01890">
    <property type="entry name" value="N-Ac-Glu-synth"/>
    <property type="match status" value="1"/>
</dbReference>
<dbReference type="NCBIfam" id="NF003641">
    <property type="entry name" value="PRK05279.1"/>
    <property type="match status" value="1"/>
</dbReference>
<dbReference type="PANTHER" id="PTHR30602">
    <property type="entry name" value="AMINO-ACID ACETYLTRANSFERASE"/>
    <property type="match status" value="1"/>
</dbReference>
<dbReference type="PANTHER" id="PTHR30602:SF12">
    <property type="entry name" value="AMINO-ACID ACETYLTRANSFERASE NAGS1, CHLOROPLASTIC-RELATED"/>
    <property type="match status" value="1"/>
</dbReference>
<dbReference type="Pfam" id="PF00696">
    <property type="entry name" value="AA_kinase"/>
    <property type="match status" value="1"/>
</dbReference>
<dbReference type="Pfam" id="PF00583">
    <property type="entry name" value="Acetyltransf_1"/>
    <property type="match status" value="1"/>
</dbReference>
<dbReference type="PIRSF" id="PIRSF000423">
    <property type="entry name" value="ArgA"/>
    <property type="match status" value="1"/>
</dbReference>
<dbReference type="SUPFAM" id="SSF55729">
    <property type="entry name" value="Acyl-CoA N-acyltransferases (Nat)"/>
    <property type="match status" value="1"/>
</dbReference>
<dbReference type="SUPFAM" id="SSF53633">
    <property type="entry name" value="Carbamate kinase-like"/>
    <property type="match status" value="1"/>
</dbReference>
<dbReference type="PROSITE" id="PS51186">
    <property type="entry name" value="GNAT"/>
    <property type="match status" value="1"/>
</dbReference>
<reference key="1">
    <citation type="submission" date="2002-12" db="EMBL/GenBank/DDBJ databases">
        <title>Complete genome sequence of Vibrio vulnificus CMCP6.</title>
        <authorList>
            <person name="Rhee J.H."/>
            <person name="Kim S.Y."/>
            <person name="Chung S.S."/>
            <person name="Kim J.J."/>
            <person name="Moon Y.H."/>
            <person name="Jeong H."/>
            <person name="Choy H.E."/>
        </authorList>
    </citation>
    <scope>NUCLEOTIDE SEQUENCE [LARGE SCALE GENOMIC DNA]</scope>
    <source>
        <strain>CMCP6</strain>
    </source>
</reference>
<gene>
    <name type="primary">argA</name>
    <name type="ordered locus">VV1_1799</name>
</gene>
<keyword id="KW-0012">Acyltransferase</keyword>
<keyword id="KW-0028">Amino-acid biosynthesis</keyword>
<keyword id="KW-0055">Arginine biosynthesis</keyword>
<keyword id="KW-0963">Cytoplasm</keyword>
<keyword id="KW-0808">Transferase</keyword>
<protein>
    <recommendedName>
        <fullName>Amino-acid acetyltransferase</fullName>
        <ecNumber>2.3.1.1</ecNumber>
    </recommendedName>
    <alternativeName>
        <fullName>N-acetylglutamate synthase</fullName>
        <shortName>AGS</shortName>
        <shortName>NAGS</shortName>
    </alternativeName>
</protein>